<keyword id="KW-0143">Chaperone</keyword>
<keyword id="KW-0963">Cytoplasm</keyword>
<keyword id="KW-0533">Nickel</keyword>
<keyword id="KW-0996">Nickel insertion</keyword>
<keyword id="KW-1185">Reference proteome</keyword>
<protein>
    <recommendedName>
        <fullName evidence="1">Urease accessory protein UreE</fullName>
    </recommendedName>
</protein>
<reference key="1">
    <citation type="journal article" date="2007" name="Science">
        <title>Legumes symbioses: absence of nod genes in photosynthetic bradyrhizobia.</title>
        <authorList>
            <person name="Giraud E."/>
            <person name="Moulin L."/>
            <person name="Vallenet D."/>
            <person name="Barbe V."/>
            <person name="Cytryn E."/>
            <person name="Avarre J.-C."/>
            <person name="Jaubert M."/>
            <person name="Simon D."/>
            <person name="Cartieaux F."/>
            <person name="Prin Y."/>
            <person name="Bena G."/>
            <person name="Hannibal L."/>
            <person name="Fardoux J."/>
            <person name="Kojadinovic M."/>
            <person name="Vuillet L."/>
            <person name="Lajus A."/>
            <person name="Cruveiller S."/>
            <person name="Rouy Z."/>
            <person name="Mangenot S."/>
            <person name="Segurens B."/>
            <person name="Dossat C."/>
            <person name="Franck W.L."/>
            <person name="Chang W.-S."/>
            <person name="Saunders E."/>
            <person name="Bruce D."/>
            <person name="Richardson P."/>
            <person name="Normand P."/>
            <person name="Dreyfus B."/>
            <person name="Pignol D."/>
            <person name="Stacey G."/>
            <person name="Emerich D."/>
            <person name="Vermeglio A."/>
            <person name="Medigue C."/>
            <person name="Sadowsky M."/>
        </authorList>
    </citation>
    <scope>NUCLEOTIDE SEQUENCE [LARGE SCALE GENOMIC DNA]</scope>
    <source>
        <strain>BTAi1 / ATCC BAA-1182</strain>
    </source>
</reference>
<sequence>MIRATRVLGQHRWTEAAADSVLLDFDDRHRRRLAMTGTRGLAFVLDLAHATALRGGDALVLEDGRLVEVVAAAEPLLEIRASDPHHLVRLAWHLGNRHLPTQIMAKSLRIRRDHVIEAMVKGLGARVIEIEAPFDPEGGAYAEPSHAQGHDEHDHHHGHDHHHDHGGHEHAHHGHDHGHAHDDHVHDEHCGHGHHHHGHAHAHDRK</sequence>
<proteinExistence type="inferred from homology"/>
<organism>
    <name type="scientific">Bradyrhizobium sp. (strain BTAi1 / ATCC BAA-1182)</name>
    <dbReference type="NCBI Taxonomy" id="288000"/>
    <lineage>
        <taxon>Bacteria</taxon>
        <taxon>Pseudomonadati</taxon>
        <taxon>Pseudomonadota</taxon>
        <taxon>Alphaproteobacteria</taxon>
        <taxon>Hyphomicrobiales</taxon>
        <taxon>Nitrobacteraceae</taxon>
        <taxon>Bradyrhizobium</taxon>
    </lineage>
</organism>
<feature type="chain" id="PRO_1000062542" description="Urease accessory protein UreE">
    <location>
        <begin position="1"/>
        <end position="206"/>
    </location>
</feature>
<feature type="region of interest" description="Disordered" evidence="2">
    <location>
        <begin position="136"/>
        <end position="206"/>
    </location>
</feature>
<feature type="compositionally biased region" description="Basic and acidic residues" evidence="2">
    <location>
        <begin position="148"/>
        <end position="169"/>
    </location>
</feature>
<feature type="compositionally biased region" description="Basic and acidic residues" evidence="2">
    <location>
        <begin position="177"/>
        <end position="191"/>
    </location>
</feature>
<feature type="compositionally biased region" description="Basic residues" evidence="2">
    <location>
        <begin position="192"/>
        <end position="206"/>
    </location>
</feature>
<evidence type="ECO:0000255" key="1">
    <source>
        <dbReference type="HAMAP-Rule" id="MF_00822"/>
    </source>
</evidence>
<evidence type="ECO:0000256" key="2">
    <source>
        <dbReference type="SAM" id="MobiDB-lite"/>
    </source>
</evidence>
<name>UREE_BRASB</name>
<accession>A5ERU8</accession>
<dbReference type="EMBL" id="CP000494">
    <property type="protein sequence ID" value="ABQ38892.1"/>
    <property type="molecule type" value="Genomic_DNA"/>
</dbReference>
<dbReference type="RefSeq" id="WP_012046824.1">
    <property type="nucleotide sequence ID" value="NC_009485.1"/>
</dbReference>
<dbReference type="SMR" id="A5ERU8"/>
<dbReference type="STRING" id="288000.BBta_7007"/>
<dbReference type="KEGG" id="bbt:BBta_7007"/>
<dbReference type="eggNOG" id="COG2371">
    <property type="taxonomic scope" value="Bacteria"/>
</dbReference>
<dbReference type="HOGENOM" id="CLU_093757_1_0_5"/>
<dbReference type="OrthoDB" id="9802215at2"/>
<dbReference type="Proteomes" id="UP000000246">
    <property type="component" value="Chromosome"/>
</dbReference>
<dbReference type="GO" id="GO:0005737">
    <property type="term" value="C:cytoplasm"/>
    <property type="evidence" value="ECO:0007669"/>
    <property type="project" value="UniProtKB-SubCell"/>
</dbReference>
<dbReference type="GO" id="GO:0016151">
    <property type="term" value="F:nickel cation binding"/>
    <property type="evidence" value="ECO:0007669"/>
    <property type="project" value="UniProtKB-UniRule"/>
</dbReference>
<dbReference type="GO" id="GO:0051082">
    <property type="term" value="F:unfolded protein binding"/>
    <property type="evidence" value="ECO:0007669"/>
    <property type="project" value="UniProtKB-UniRule"/>
</dbReference>
<dbReference type="GO" id="GO:0006457">
    <property type="term" value="P:protein folding"/>
    <property type="evidence" value="ECO:0007669"/>
    <property type="project" value="InterPro"/>
</dbReference>
<dbReference type="GO" id="GO:0065003">
    <property type="term" value="P:protein-containing complex assembly"/>
    <property type="evidence" value="ECO:0007669"/>
    <property type="project" value="InterPro"/>
</dbReference>
<dbReference type="GO" id="GO:0019627">
    <property type="term" value="P:urea metabolic process"/>
    <property type="evidence" value="ECO:0007669"/>
    <property type="project" value="InterPro"/>
</dbReference>
<dbReference type="CDD" id="cd00571">
    <property type="entry name" value="UreE"/>
    <property type="match status" value="1"/>
</dbReference>
<dbReference type="Gene3D" id="2.60.260.20">
    <property type="entry name" value="Urease metallochaperone UreE, N-terminal domain"/>
    <property type="match status" value="1"/>
</dbReference>
<dbReference type="Gene3D" id="3.30.70.790">
    <property type="entry name" value="UreE, C-terminal domain"/>
    <property type="match status" value="1"/>
</dbReference>
<dbReference type="HAMAP" id="MF_00822">
    <property type="entry name" value="UreE"/>
    <property type="match status" value="1"/>
</dbReference>
<dbReference type="InterPro" id="IPR012406">
    <property type="entry name" value="UreE"/>
</dbReference>
<dbReference type="InterPro" id="IPR007864">
    <property type="entry name" value="UreE_C_dom"/>
</dbReference>
<dbReference type="InterPro" id="IPR004029">
    <property type="entry name" value="UreE_N"/>
</dbReference>
<dbReference type="InterPro" id="IPR036118">
    <property type="entry name" value="UreE_N_sf"/>
</dbReference>
<dbReference type="Pfam" id="PF05194">
    <property type="entry name" value="UreE_C"/>
    <property type="match status" value="1"/>
</dbReference>
<dbReference type="Pfam" id="PF02814">
    <property type="entry name" value="UreE_N"/>
    <property type="match status" value="1"/>
</dbReference>
<dbReference type="SMART" id="SM00988">
    <property type="entry name" value="UreE_N"/>
    <property type="match status" value="1"/>
</dbReference>
<dbReference type="SUPFAM" id="SSF69737">
    <property type="entry name" value="Urease metallochaperone UreE, C-terminal domain"/>
    <property type="match status" value="1"/>
</dbReference>
<dbReference type="SUPFAM" id="SSF69287">
    <property type="entry name" value="Urease metallochaperone UreE, N-terminal domain"/>
    <property type="match status" value="1"/>
</dbReference>
<gene>
    <name evidence="1" type="primary">ureE</name>
    <name type="ordered locus">BBta_7007</name>
</gene>
<comment type="function">
    <text evidence="1">Involved in urease metallocenter assembly. Binds nickel. Probably functions as a nickel donor during metallocenter assembly.</text>
</comment>
<comment type="subcellular location">
    <subcellularLocation>
        <location evidence="1">Cytoplasm</location>
    </subcellularLocation>
</comment>
<comment type="similarity">
    <text evidence="1">Belongs to the UreE family.</text>
</comment>